<organism>
    <name type="scientific">Acidiphilium cryptum (strain JF-5)</name>
    <dbReference type="NCBI Taxonomy" id="349163"/>
    <lineage>
        <taxon>Bacteria</taxon>
        <taxon>Pseudomonadati</taxon>
        <taxon>Pseudomonadota</taxon>
        <taxon>Alphaproteobacteria</taxon>
        <taxon>Acetobacterales</taxon>
        <taxon>Acidocellaceae</taxon>
        <taxon>Acidiphilium</taxon>
    </lineage>
</organism>
<comment type="function">
    <text evidence="1">The RuvA-RuvB-RuvC complex processes Holliday junction (HJ) DNA during genetic recombination and DNA repair. Endonuclease that resolves HJ intermediates. Cleaves cruciform DNA by making single-stranded nicks across the HJ at symmetrical positions within the homologous arms, yielding a 5'-phosphate and a 3'-hydroxyl group; requires a central core of homology in the junction. The consensus cleavage sequence is 5'-(A/T)TT(C/G)-3'. Cleavage occurs on the 3'-side of the TT dinucleotide at the point of strand exchange. HJ branch migration catalyzed by RuvA-RuvB allows RuvC to scan DNA until it finds its consensus sequence, where it cleaves and resolves the cruciform DNA.</text>
</comment>
<comment type="catalytic activity">
    <reaction evidence="1">
        <text>Endonucleolytic cleavage at a junction such as a reciprocal single-stranded crossover between two homologous DNA duplexes (Holliday junction).</text>
        <dbReference type="EC" id="3.1.21.10"/>
    </reaction>
</comment>
<comment type="cofactor">
    <cofactor evidence="1">
        <name>Mg(2+)</name>
        <dbReference type="ChEBI" id="CHEBI:18420"/>
    </cofactor>
    <text evidence="1">Binds 2 Mg(2+) ion per subunit.</text>
</comment>
<comment type="subunit">
    <text evidence="1">Homodimer which binds Holliday junction (HJ) DNA. The HJ becomes 2-fold symmetrical on binding to RuvC with unstacked arms; it has a different conformation from HJ DNA in complex with RuvA. In the full resolvosome a probable DNA-RuvA(4)-RuvB(12)-RuvC(2) complex forms which resolves the HJ.</text>
</comment>
<comment type="subcellular location">
    <subcellularLocation>
        <location evidence="1">Cytoplasm</location>
    </subcellularLocation>
</comment>
<comment type="similarity">
    <text evidence="1">Belongs to the RuvC family.</text>
</comment>
<name>RUVC_ACICJ</name>
<sequence length="167" mass="17186">MPIRARIIGIDPGLRFTGFGIIEADGNRLRHVADGVIATDGAAAVAERLHTLDAALARLLATYAPDHAAVEETYVNRNATATLKLGYARGVALLAPARAGIAVAEYGAKTVKRAVVGTGAAEKDQVALMVRRLLPGAAITRADAADALAVAICHAHHLATASRVPAA</sequence>
<feature type="chain" id="PRO_0000332408" description="Crossover junction endodeoxyribonuclease RuvC">
    <location>
        <begin position="1"/>
        <end position="167"/>
    </location>
</feature>
<feature type="active site" evidence="1">
    <location>
        <position position="11"/>
    </location>
</feature>
<feature type="active site" evidence="1">
    <location>
        <position position="71"/>
    </location>
</feature>
<feature type="active site" evidence="1">
    <location>
        <position position="143"/>
    </location>
</feature>
<feature type="binding site" evidence="1">
    <location>
        <position position="11"/>
    </location>
    <ligand>
        <name>Mg(2+)</name>
        <dbReference type="ChEBI" id="CHEBI:18420"/>
        <label>1</label>
    </ligand>
</feature>
<feature type="binding site" evidence="1">
    <location>
        <position position="71"/>
    </location>
    <ligand>
        <name>Mg(2+)</name>
        <dbReference type="ChEBI" id="CHEBI:18420"/>
        <label>2</label>
    </ligand>
</feature>
<feature type="binding site" evidence="1">
    <location>
        <position position="143"/>
    </location>
    <ligand>
        <name>Mg(2+)</name>
        <dbReference type="ChEBI" id="CHEBI:18420"/>
        <label>1</label>
    </ligand>
</feature>
<proteinExistence type="inferred from homology"/>
<gene>
    <name evidence="1" type="primary">ruvC</name>
    <name type="ordered locus">Acry_2906</name>
</gene>
<keyword id="KW-0963">Cytoplasm</keyword>
<keyword id="KW-0227">DNA damage</keyword>
<keyword id="KW-0233">DNA recombination</keyword>
<keyword id="KW-0234">DNA repair</keyword>
<keyword id="KW-0238">DNA-binding</keyword>
<keyword id="KW-0255">Endonuclease</keyword>
<keyword id="KW-0378">Hydrolase</keyword>
<keyword id="KW-0460">Magnesium</keyword>
<keyword id="KW-0479">Metal-binding</keyword>
<keyword id="KW-0540">Nuclease</keyword>
<keyword id="KW-1185">Reference proteome</keyword>
<accession>A5G2L4</accession>
<dbReference type="EC" id="3.1.21.10" evidence="1"/>
<dbReference type="EMBL" id="CP000697">
    <property type="protein sequence ID" value="ABQ32096.1"/>
    <property type="molecule type" value="Genomic_DNA"/>
</dbReference>
<dbReference type="RefSeq" id="WP_012040400.1">
    <property type="nucleotide sequence ID" value="NC_009484.1"/>
</dbReference>
<dbReference type="SMR" id="A5G2L4"/>
<dbReference type="STRING" id="349163.Acry_2906"/>
<dbReference type="KEGG" id="acr:Acry_2906"/>
<dbReference type="eggNOG" id="COG0817">
    <property type="taxonomic scope" value="Bacteria"/>
</dbReference>
<dbReference type="HOGENOM" id="CLU_091257_1_0_5"/>
<dbReference type="Proteomes" id="UP000000245">
    <property type="component" value="Chromosome"/>
</dbReference>
<dbReference type="GO" id="GO:0005737">
    <property type="term" value="C:cytoplasm"/>
    <property type="evidence" value="ECO:0007669"/>
    <property type="project" value="UniProtKB-SubCell"/>
</dbReference>
<dbReference type="GO" id="GO:0048476">
    <property type="term" value="C:Holliday junction resolvase complex"/>
    <property type="evidence" value="ECO:0007669"/>
    <property type="project" value="UniProtKB-UniRule"/>
</dbReference>
<dbReference type="GO" id="GO:0008821">
    <property type="term" value="F:crossover junction DNA endonuclease activity"/>
    <property type="evidence" value="ECO:0007669"/>
    <property type="project" value="UniProtKB-UniRule"/>
</dbReference>
<dbReference type="GO" id="GO:0003677">
    <property type="term" value="F:DNA binding"/>
    <property type="evidence" value="ECO:0007669"/>
    <property type="project" value="UniProtKB-KW"/>
</dbReference>
<dbReference type="GO" id="GO:0000287">
    <property type="term" value="F:magnesium ion binding"/>
    <property type="evidence" value="ECO:0007669"/>
    <property type="project" value="UniProtKB-UniRule"/>
</dbReference>
<dbReference type="GO" id="GO:0006310">
    <property type="term" value="P:DNA recombination"/>
    <property type="evidence" value="ECO:0007669"/>
    <property type="project" value="UniProtKB-UniRule"/>
</dbReference>
<dbReference type="GO" id="GO:0006281">
    <property type="term" value="P:DNA repair"/>
    <property type="evidence" value="ECO:0007669"/>
    <property type="project" value="UniProtKB-UniRule"/>
</dbReference>
<dbReference type="CDD" id="cd16962">
    <property type="entry name" value="RuvC"/>
    <property type="match status" value="1"/>
</dbReference>
<dbReference type="FunFam" id="3.30.420.10:FF:000002">
    <property type="entry name" value="Crossover junction endodeoxyribonuclease RuvC"/>
    <property type="match status" value="1"/>
</dbReference>
<dbReference type="Gene3D" id="3.30.420.10">
    <property type="entry name" value="Ribonuclease H-like superfamily/Ribonuclease H"/>
    <property type="match status" value="1"/>
</dbReference>
<dbReference type="HAMAP" id="MF_00034">
    <property type="entry name" value="RuvC"/>
    <property type="match status" value="1"/>
</dbReference>
<dbReference type="InterPro" id="IPR012337">
    <property type="entry name" value="RNaseH-like_sf"/>
</dbReference>
<dbReference type="InterPro" id="IPR036397">
    <property type="entry name" value="RNaseH_sf"/>
</dbReference>
<dbReference type="InterPro" id="IPR020563">
    <property type="entry name" value="X-over_junc_endoDNase_Mg_BS"/>
</dbReference>
<dbReference type="InterPro" id="IPR002176">
    <property type="entry name" value="X-over_junc_endoDNase_RuvC"/>
</dbReference>
<dbReference type="NCBIfam" id="TIGR00228">
    <property type="entry name" value="ruvC"/>
    <property type="match status" value="1"/>
</dbReference>
<dbReference type="PANTHER" id="PTHR30194">
    <property type="entry name" value="CROSSOVER JUNCTION ENDODEOXYRIBONUCLEASE RUVC"/>
    <property type="match status" value="1"/>
</dbReference>
<dbReference type="PANTHER" id="PTHR30194:SF3">
    <property type="entry name" value="CROSSOVER JUNCTION ENDODEOXYRIBONUCLEASE RUVC"/>
    <property type="match status" value="1"/>
</dbReference>
<dbReference type="Pfam" id="PF02075">
    <property type="entry name" value="RuvC"/>
    <property type="match status" value="1"/>
</dbReference>
<dbReference type="PRINTS" id="PR00696">
    <property type="entry name" value="RSOLVASERUVC"/>
</dbReference>
<dbReference type="SUPFAM" id="SSF53098">
    <property type="entry name" value="Ribonuclease H-like"/>
    <property type="match status" value="1"/>
</dbReference>
<dbReference type="PROSITE" id="PS01321">
    <property type="entry name" value="RUVC"/>
    <property type="match status" value="1"/>
</dbReference>
<evidence type="ECO:0000255" key="1">
    <source>
        <dbReference type="HAMAP-Rule" id="MF_00034"/>
    </source>
</evidence>
<reference key="1">
    <citation type="submission" date="2007-05" db="EMBL/GenBank/DDBJ databases">
        <title>Complete sequence of chromosome of Acidiphilium cryptum JF-5.</title>
        <authorList>
            <consortium name="US DOE Joint Genome Institute"/>
            <person name="Copeland A."/>
            <person name="Lucas S."/>
            <person name="Lapidus A."/>
            <person name="Barry K."/>
            <person name="Detter J.C."/>
            <person name="Glavina del Rio T."/>
            <person name="Hammon N."/>
            <person name="Israni S."/>
            <person name="Dalin E."/>
            <person name="Tice H."/>
            <person name="Pitluck S."/>
            <person name="Sims D."/>
            <person name="Brettin T."/>
            <person name="Bruce D."/>
            <person name="Han C."/>
            <person name="Schmutz J."/>
            <person name="Larimer F."/>
            <person name="Land M."/>
            <person name="Hauser L."/>
            <person name="Kyrpides N."/>
            <person name="Kim E."/>
            <person name="Magnuson T."/>
            <person name="Richardson P."/>
        </authorList>
    </citation>
    <scope>NUCLEOTIDE SEQUENCE [LARGE SCALE GENOMIC DNA]</scope>
    <source>
        <strain>JF-5</strain>
    </source>
</reference>
<protein>
    <recommendedName>
        <fullName evidence="1">Crossover junction endodeoxyribonuclease RuvC</fullName>
        <ecNumber evidence="1">3.1.21.10</ecNumber>
    </recommendedName>
    <alternativeName>
        <fullName evidence="1">Holliday junction nuclease RuvC</fullName>
    </alternativeName>
    <alternativeName>
        <fullName evidence="1">Holliday junction resolvase RuvC</fullName>
    </alternativeName>
</protein>